<accession>Q9X1U9</accession>
<keyword id="KW-0066">ATP synthesis</keyword>
<keyword id="KW-0997">Cell inner membrane</keyword>
<keyword id="KW-1003">Cell membrane</keyword>
<keyword id="KW-0138">CF(0)</keyword>
<keyword id="KW-0375">Hydrogen ion transport</keyword>
<keyword id="KW-0406">Ion transport</keyword>
<keyword id="KW-0472">Membrane</keyword>
<keyword id="KW-1185">Reference proteome</keyword>
<keyword id="KW-0812">Transmembrane</keyword>
<keyword id="KW-1133">Transmembrane helix</keyword>
<keyword id="KW-0813">Transport</keyword>
<gene>
    <name evidence="1" type="primary">atpF</name>
    <name type="ordered locus">TM_1614</name>
</gene>
<proteinExistence type="inferred from homology"/>
<protein>
    <recommendedName>
        <fullName evidence="1">ATP synthase subunit b</fullName>
    </recommendedName>
    <alternativeName>
        <fullName evidence="1">ATP synthase F(0) sector subunit b</fullName>
    </alternativeName>
    <alternativeName>
        <fullName evidence="1">ATPase subunit I</fullName>
    </alternativeName>
    <alternativeName>
        <fullName evidence="1">F-type ATPase subunit b</fullName>
        <shortName evidence="1">F-ATPase subunit b</shortName>
    </alternativeName>
</protein>
<comment type="function">
    <text evidence="1">F(1)F(0) ATP synthase produces ATP from ADP in the presence of a proton or sodium gradient. F-type ATPases consist of two structural domains, F(1) containing the extramembraneous catalytic core and F(0) containing the membrane proton channel, linked together by a central stalk and a peripheral stalk. During catalysis, ATP synthesis in the catalytic domain of F(1) is coupled via a rotary mechanism of the central stalk subunits to proton translocation.</text>
</comment>
<comment type="function">
    <text evidence="1">Component of the F(0) channel, it forms part of the peripheral stalk, linking F(1) to F(0).</text>
</comment>
<comment type="subunit">
    <text evidence="1">F-type ATPases have 2 components, F(1) - the catalytic core - and F(0) - the membrane proton channel. F(1) has five subunits: alpha(3), beta(3), gamma(1), delta(1), epsilon(1). F(0) has three main subunits: a(1), b(2) and c(10-14). The alpha and beta chains form an alternating ring which encloses part of the gamma chain. F(1) is attached to F(0) by a central stalk formed by the gamma and epsilon chains, while a peripheral stalk is formed by the delta and b chains.</text>
</comment>
<comment type="subcellular location">
    <subcellularLocation>
        <location evidence="1">Cell inner membrane</location>
        <topology evidence="1">Single-pass membrane protein</topology>
    </subcellularLocation>
</comment>
<comment type="similarity">
    <text evidence="1">Belongs to the ATPase B chain family.</text>
</comment>
<evidence type="ECO:0000255" key="1">
    <source>
        <dbReference type="HAMAP-Rule" id="MF_01398"/>
    </source>
</evidence>
<sequence>MGFLEINWTSAAMLMLFVLMVYFLNKFLYTPFIEMAEKRRKKVEEDLKSAEQLKEEAEKMRSEAERFLSEARQRADEIVESARKEAEAIVEEAREKAKKEAQNIVESAKTQIEVEYKKALEQVQERAAELSVILATKLLQKVFQDERARREYLVKILKEEIEKS</sequence>
<name>ATPF_THEMA</name>
<reference key="1">
    <citation type="journal article" date="1999" name="Nature">
        <title>Evidence for lateral gene transfer between Archaea and Bacteria from genome sequence of Thermotoga maritima.</title>
        <authorList>
            <person name="Nelson K.E."/>
            <person name="Clayton R.A."/>
            <person name="Gill S.R."/>
            <person name="Gwinn M.L."/>
            <person name="Dodson R.J."/>
            <person name="Haft D.H."/>
            <person name="Hickey E.K."/>
            <person name="Peterson J.D."/>
            <person name="Nelson W.C."/>
            <person name="Ketchum K.A."/>
            <person name="McDonald L.A."/>
            <person name="Utterback T.R."/>
            <person name="Malek J.A."/>
            <person name="Linher K.D."/>
            <person name="Garrett M.M."/>
            <person name="Stewart A.M."/>
            <person name="Cotton M.D."/>
            <person name="Pratt M.S."/>
            <person name="Phillips C.A."/>
            <person name="Richardson D.L."/>
            <person name="Heidelberg J.F."/>
            <person name="Sutton G.G."/>
            <person name="Fleischmann R.D."/>
            <person name="Eisen J.A."/>
            <person name="White O."/>
            <person name="Salzberg S.L."/>
            <person name="Smith H.O."/>
            <person name="Venter J.C."/>
            <person name="Fraser C.M."/>
        </authorList>
    </citation>
    <scope>NUCLEOTIDE SEQUENCE [LARGE SCALE GENOMIC DNA]</scope>
    <source>
        <strain>ATCC 43589 / DSM 3109 / JCM 10099 / NBRC 100826 / MSB8</strain>
    </source>
</reference>
<feature type="chain" id="PRO_0000368843" description="ATP synthase subunit b">
    <location>
        <begin position="1"/>
        <end position="164"/>
    </location>
</feature>
<feature type="transmembrane region" description="Helical" evidence="1">
    <location>
        <begin position="10"/>
        <end position="32"/>
    </location>
</feature>
<organism>
    <name type="scientific">Thermotoga maritima (strain ATCC 43589 / DSM 3109 / JCM 10099 / NBRC 100826 / MSB8)</name>
    <dbReference type="NCBI Taxonomy" id="243274"/>
    <lineage>
        <taxon>Bacteria</taxon>
        <taxon>Thermotogati</taxon>
        <taxon>Thermotogota</taxon>
        <taxon>Thermotogae</taxon>
        <taxon>Thermotogales</taxon>
        <taxon>Thermotogaceae</taxon>
        <taxon>Thermotoga</taxon>
    </lineage>
</organism>
<dbReference type="EMBL" id="AE000512">
    <property type="protein sequence ID" value="AAD36681.1"/>
    <property type="molecule type" value="Genomic_DNA"/>
</dbReference>
<dbReference type="PIR" id="H72231">
    <property type="entry name" value="H72231"/>
</dbReference>
<dbReference type="RefSeq" id="NP_229414.1">
    <property type="nucleotide sequence ID" value="NC_000853.1"/>
</dbReference>
<dbReference type="RefSeq" id="WP_004082072.1">
    <property type="nucleotide sequence ID" value="NZ_CP011107.1"/>
</dbReference>
<dbReference type="SMR" id="Q9X1U9"/>
<dbReference type="STRING" id="243274.TM_1614"/>
<dbReference type="PaxDb" id="243274-THEMA_06180"/>
<dbReference type="EnsemblBacteria" id="AAD36681">
    <property type="protein sequence ID" value="AAD36681"/>
    <property type="gene ID" value="TM_1614"/>
</dbReference>
<dbReference type="KEGG" id="tma:TM1614"/>
<dbReference type="KEGG" id="tmi:THEMA_06180"/>
<dbReference type="KEGG" id="tmm:Tmari_1622"/>
<dbReference type="KEGG" id="tmw:THMA_1654"/>
<dbReference type="eggNOG" id="COG0711">
    <property type="taxonomic scope" value="Bacteria"/>
</dbReference>
<dbReference type="InParanoid" id="Q9X1U9"/>
<dbReference type="OrthoDB" id="5518984at2"/>
<dbReference type="Proteomes" id="UP000008183">
    <property type="component" value="Chromosome"/>
</dbReference>
<dbReference type="GO" id="GO:0005886">
    <property type="term" value="C:plasma membrane"/>
    <property type="evidence" value="ECO:0007669"/>
    <property type="project" value="UniProtKB-SubCell"/>
</dbReference>
<dbReference type="GO" id="GO:0045259">
    <property type="term" value="C:proton-transporting ATP synthase complex"/>
    <property type="evidence" value="ECO:0007669"/>
    <property type="project" value="UniProtKB-KW"/>
</dbReference>
<dbReference type="GO" id="GO:0046933">
    <property type="term" value="F:proton-transporting ATP synthase activity, rotational mechanism"/>
    <property type="evidence" value="ECO:0007669"/>
    <property type="project" value="UniProtKB-UniRule"/>
</dbReference>
<dbReference type="CDD" id="cd06503">
    <property type="entry name" value="ATP-synt_Fo_b"/>
    <property type="match status" value="1"/>
</dbReference>
<dbReference type="Gene3D" id="1.20.5.620">
    <property type="entry name" value="F1F0 ATP synthase subunit B, membrane domain"/>
    <property type="match status" value="1"/>
</dbReference>
<dbReference type="HAMAP" id="MF_01398">
    <property type="entry name" value="ATP_synth_b_bprime"/>
    <property type="match status" value="1"/>
</dbReference>
<dbReference type="InterPro" id="IPR028987">
    <property type="entry name" value="ATP_synth_B-like_membr_sf"/>
</dbReference>
<dbReference type="InterPro" id="IPR002146">
    <property type="entry name" value="ATP_synth_b/b'su_bac/chlpt"/>
</dbReference>
<dbReference type="InterPro" id="IPR005864">
    <property type="entry name" value="ATP_synth_F0_bsu_bac"/>
</dbReference>
<dbReference type="InterPro" id="IPR050059">
    <property type="entry name" value="ATP_synthase_B_chain"/>
</dbReference>
<dbReference type="NCBIfam" id="TIGR01144">
    <property type="entry name" value="ATP_synt_b"/>
    <property type="match status" value="1"/>
</dbReference>
<dbReference type="PANTHER" id="PTHR33445:SF1">
    <property type="entry name" value="ATP SYNTHASE SUBUNIT B"/>
    <property type="match status" value="1"/>
</dbReference>
<dbReference type="PANTHER" id="PTHR33445">
    <property type="entry name" value="ATP SYNTHASE SUBUNIT B', CHLOROPLASTIC"/>
    <property type="match status" value="1"/>
</dbReference>
<dbReference type="Pfam" id="PF00430">
    <property type="entry name" value="ATP-synt_B"/>
    <property type="match status" value="1"/>
</dbReference>
<dbReference type="SUPFAM" id="SSF81573">
    <property type="entry name" value="F1F0 ATP synthase subunit B, membrane domain"/>
    <property type="match status" value="1"/>
</dbReference>